<accession>B6J248</accession>
<organism>
    <name type="scientific">Coxiella burnetii (strain CbuG_Q212)</name>
    <name type="common">Coxiella burnetii (strain Q212)</name>
    <dbReference type="NCBI Taxonomy" id="434923"/>
    <lineage>
        <taxon>Bacteria</taxon>
        <taxon>Pseudomonadati</taxon>
        <taxon>Pseudomonadota</taxon>
        <taxon>Gammaproteobacteria</taxon>
        <taxon>Legionellales</taxon>
        <taxon>Coxiellaceae</taxon>
        <taxon>Coxiella</taxon>
    </lineage>
</organism>
<sequence length="178" mass="19254">MVSRVAKNPIKIPTGVEVNVAGQQITVKGKLGTLTRVIHRAVKVTKTDAELQTICANDSPGSNALAGTARAVLANMVQGVHTGFQRKLVMVGVGYRAKAEDKKLNLTVGLSHPVNIEMPEGITVETPSQTEIIVKGADKQRVSQVAANIREIRPPEPYKGKGIRYDNERVILKEAKKK</sequence>
<keyword id="KW-0687">Ribonucleoprotein</keyword>
<keyword id="KW-0689">Ribosomal protein</keyword>
<keyword id="KW-0694">RNA-binding</keyword>
<keyword id="KW-0699">rRNA-binding</keyword>
<gene>
    <name evidence="1" type="primary">rplF</name>
    <name type="ordered locus">CbuG_1752</name>
</gene>
<proteinExistence type="inferred from homology"/>
<name>RL6_COXB2</name>
<protein>
    <recommendedName>
        <fullName evidence="1">Large ribosomal subunit protein uL6</fullName>
    </recommendedName>
    <alternativeName>
        <fullName evidence="2">50S ribosomal protein L6</fullName>
    </alternativeName>
</protein>
<dbReference type="EMBL" id="CP001019">
    <property type="protein sequence ID" value="ACJ19026.1"/>
    <property type="molecule type" value="Genomic_DNA"/>
</dbReference>
<dbReference type="RefSeq" id="WP_012570411.1">
    <property type="nucleotide sequence ID" value="NC_011527.1"/>
</dbReference>
<dbReference type="SMR" id="B6J248"/>
<dbReference type="KEGG" id="cbg:CbuG_1752"/>
<dbReference type="HOGENOM" id="CLU_065464_1_2_6"/>
<dbReference type="GO" id="GO:0022625">
    <property type="term" value="C:cytosolic large ribosomal subunit"/>
    <property type="evidence" value="ECO:0007669"/>
    <property type="project" value="TreeGrafter"/>
</dbReference>
<dbReference type="GO" id="GO:0019843">
    <property type="term" value="F:rRNA binding"/>
    <property type="evidence" value="ECO:0007669"/>
    <property type="project" value="UniProtKB-UniRule"/>
</dbReference>
<dbReference type="GO" id="GO:0003735">
    <property type="term" value="F:structural constituent of ribosome"/>
    <property type="evidence" value="ECO:0007669"/>
    <property type="project" value="InterPro"/>
</dbReference>
<dbReference type="GO" id="GO:0002181">
    <property type="term" value="P:cytoplasmic translation"/>
    <property type="evidence" value="ECO:0007669"/>
    <property type="project" value="TreeGrafter"/>
</dbReference>
<dbReference type="FunFam" id="3.90.930.12:FF:000001">
    <property type="entry name" value="50S ribosomal protein L6"/>
    <property type="match status" value="1"/>
</dbReference>
<dbReference type="FunFam" id="3.90.930.12:FF:000002">
    <property type="entry name" value="50S ribosomal protein L6"/>
    <property type="match status" value="1"/>
</dbReference>
<dbReference type="Gene3D" id="3.90.930.12">
    <property type="entry name" value="Ribosomal protein L6, alpha-beta domain"/>
    <property type="match status" value="2"/>
</dbReference>
<dbReference type="HAMAP" id="MF_01365_B">
    <property type="entry name" value="Ribosomal_uL6_B"/>
    <property type="match status" value="1"/>
</dbReference>
<dbReference type="InterPro" id="IPR000702">
    <property type="entry name" value="Ribosomal_uL6-like"/>
</dbReference>
<dbReference type="InterPro" id="IPR036789">
    <property type="entry name" value="Ribosomal_uL6-like_a/b-dom_sf"/>
</dbReference>
<dbReference type="InterPro" id="IPR020040">
    <property type="entry name" value="Ribosomal_uL6_a/b-dom"/>
</dbReference>
<dbReference type="InterPro" id="IPR019906">
    <property type="entry name" value="Ribosomal_uL6_bac-type"/>
</dbReference>
<dbReference type="InterPro" id="IPR002358">
    <property type="entry name" value="Ribosomal_uL6_CS"/>
</dbReference>
<dbReference type="NCBIfam" id="TIGR03654">
    <property type="entry name" value="L6_bact"/>
    <property type="match status" value="1"/>
</dbReference>
<dbReference type="PANTHER" id="PTHR11655">
    <property type="entry name" value="60S/50S RIBOSOMAL PROTEIN L6/L9"/>
    <property type="match status" value="1"/>
</dbReference>
<dbReference type="PANTHER" id="PTHR11655:SF14">
    <property type="entry name" value="LARGE RIBOSOMAL SUBUNIT PROTEIN UL6M"/>
    <property type="match status" value="1"/>
</dbReference>
<dbReference type="Pfam" id="PF00347">
    <property type="entry name" value="Ribosomal_L6"/>
    <property type="match status" value="2"/>
</dbReference>
<dbReference type="PIRSF" id="PIRSF002162">
    <property type="entry name" value="Ribosomal_L6"/>
    <property type="match status" value="1"/>
</dbReference>
<dbReference type="PRINTS" id="PR00059">
    <property type="entry name" value="RIBOSOMALL6"/>
</dbReference>
<dbReference type="SUPFAM" id="SSF56053">
    <property type="entry name" value="Ribosomal protein L6"/>
    <property type="match status" value="2"/>
</dbReference>
<dbReference type="PROSITE" id="PS00525">
    <property type="entry name" value="RIBOSOMAL_L6_1"/>
    <property type="match status" value="1"/>
</dbReference>
<comment type="function">
    <text evidence="1">This protein binds to the 23S rRNA, and is important in its secondary structure. It is located near the subunit interface in the base of the L7/L12 stalk, and near the tRNA binding site of the peptidyltransferase center.</text>
</comment>
<comment type="subunit">
    <text evidence="1">Part of the 50S ribosomal subunit.</text>
</comment>
<comment type="similarity">
    <text evidence="1">Belongs to the universal ribosomal protein uL6 family.</text>
</comment>
<feature type="chain" id="PRO_1000143970" description="Large ribosomal subunit protein uL6">
    <location>
        <begin position="1"/>
        <end position="178"/>
    </location>
</feature>
<reference key="1">
    <citation type="journal article" date="2009" name="Infect. Immun.">
        <title>Comparative genomics reveal extensive transposon-mediated genomic plasticity and diversity among potential effector proteins within the genus Coxiella.</title>
        <authorList>
            <person name="Beare P.A."/>
            <person name="Unsworth N."/>
            <person name="Andoh M."/>
            <person name="Voth D.E."/>
            <person name="Omsland A."/>
            <person name="Gilk S.D."/>
            <person name="Williams K.P."/>
            <person name="Sobral B.W."/>
            <person name="Kupko J.J. III"/>
            <person name="Porcella S.F."/>
            <person name="Samuel J.E."/>
            <person name="Heinzen R.A."/>
        </authorList>
    </citation>
    <scope>NUCLEOTIDE SEQUENCE [LARGE SCALE GENOMIC DNA]</scope>
    <source>
        <strain>CbuG_Q212</strain>
    </source>
</reference>
<evidence type="ECO:0000255" key="1">
    <source>
        <dbReference type="HAMAP-Rule" id="MF_01365"/>
    </source>
</evidence>
<evidence type="ECO:0000305" key="2"/>